<proteinExistence type="inferred from homology"/>
<feature type="chain" id="PRO_1000189870" description="Elongation factor Ts">
    <location>
        <begin position="1"/>
        <end position="306"/>
    </location>
</feature>
<feature type="region of interest" description="Involved in Mg(2+) ion dislocation from EF-Tu" evidence="1">
    <location>
        <begin position="80"/>
        <end position="83"/>
    </location>
</feature>
<organism>
    <name type="scientific">Clostridium kluyveri (strain NBRC 12016)</name>
    <dbReference type="NCBI Taxonomy" id="583346"/>
    <lineage>
        <taxon>Bacteria</taxon>
        <taxon>Bacillati</taxon>
        <taxon>Bacillota</taxon>
        <taxon>Clostridia</taxon>
        <taxon>Eubacteriales</taxon>
        <taxon>Clostridiaceae</taxon>
        <taxon>Clostridium</taxon>
    </lineage>
</organism>
<accession>B9E1I9</accession>
<evidence type="ECO:0000255" key="1">
    <source>
        <dbReference type="HAMAP-Rule" id="MF_00050"/>
    </source>
</evidence>
<keyword id="KW-0963">Cytoplasm</keyword>
<keyword id="KW-0251">Elongation factor</keyword>
<keyword id="KW-0648">Protein biosynthesis</keyword>
<comment type="function">
    <text evidence="1">Associates with the EF-Tu.GDP complex and induces the exchange of GDP to GTP. It remains bound to the aminoacyl-tRNA.EF-Tu.GTP complex up to the GTP hydrolysis stage on the ribosome.</text>
</comment>
<comment type="subcellular location">
    <subcellularLocation>
        <location evidence="1">Cytoplasm</location>
    </subcellularLocation>
</comment>
<comment type="similarity">
    <text evidence="1">Belongs to the EF-Ts family.</text>
</comment>
<dbReference type="EMBL" id="AP009049">
    <property type="protein sequence ID" value="BAH06364.1"/>
    <property type="molecule type" value="Genomic_DNA"/>
</dbReference>
<dbReference type="RefSeq" id="WP_012101807.1">
    <property type="nucleotide sequence ID" value="NC_011837.1"/>
</dbReference>
<dbReference type="SMR" id="B9E1I9"/>
<dbReference type="KEGG" id="ckr:CKR_1313"/>
<dbReference type="HOGENOM" id="CLU_047155_0_0_9"/>
<dbReference type="Proteomes" id="UP000007969">
    <property type="component" value="Chromosome"/>
</dbReference>
<dbReference type="GO" id="GO:0005737">
    <property type="term" value="C:cytoplasm"/>
    <property type="evidence" value="ECO:0007669"/>
    <property type="project" value="UniProtKB-SubCell"/>
</dbReference>
<dbReference type="GO" id="GO:0003746">
    <property type="term" value="F:translation elongation factor activity"/>
    <property type="evidence" value="ECO:0007669"/>
    <property type="project" value="UniProtKB-UniRule"/>
</dbReference>
<dbReference type="CDD" id="cd14275">
    <property type="entry name" value="UBA_EF-Ts"/>
    <property type="match status" value="1"/>
</dbReference>
<dbReference type="FunFam" id="1.10.286.20:FF:000001">
    <property type="entry name" value="Elongation factor Ts"/>
    <property type="match status" value="1"/>
</dbReference>
<dbReference type="FunFam" id="1.10.8.10:FF:000001">
    <property type="entry name" value="Elongation factor Ts"/>
    <property type="match status" value="1"/>
</dbReference>
<dbReference type="Gene3D" id="1.10.286.20">
    <property type="match status" value="1"/>
</dbReference>
<dbReference type="Gene3D" id="1.10.8.10">
    <property type="entry name" value="DNA helicase RuvA subunit, C-terminal domain"/>
    <property type="match status" value="1"/>
</dbReference>
<dbReference type="Gene3D" id="3.30.479.20">
    <property type="entry name" value="Elongation factor Ts, dimerisation domain"/>
    <property type="match status" value="2"/>
</dbReference>
<dbReference type="HAMAP" id="MF_00050">
    <property type="entry name" value="EF_Ts"/>
    <property type="match status" value="1"/>
</dbReference>
<dbReference type="InterPro" id="IPR036402">
    <property type="entry name" value="EF-Ts_dimer_sf"/>
</dbReference>
<dbReference type="InterPro" id="IPR001816">
    <property type="entry name" value="Transl_elong_EFTs/EF1B"/>
</dbReference>
<dbReference type="InterPro" id="IPR014039">
    <property type="entry name" value="Transl_elong_EFTs/EF1B_dimer"/>
</dbReference>
<dbReference type="InterPro" id="IPR018101">
    <property type="entry name" value="Transl_elong_Ts_CS"/>
</dbReference>
<dbReference type="InterPro" id="IPR009060">
    <property type="entry name" value="UBA-like_sf"/>
</dbReference>
<dbReference type="NCBIfam" id="TIGR00116">
    <property type="entry name" value="tsf"/>
    <property type="match status" value="1"/>
</dbReference>
<dbReference type="PANTHER" id="PTHR11741">
    <property type="entry name" value="ELONGATION FACTOR TS"/>
    <property type="match status" value="1"/>
</dbReference>
<dbReference type="PANTHER" id="PTHR11741:SF0">
    <property type="entry name" value="ELONGATION FACTOR TS, MITOCHONDRIAL"/>
    <property type="match status" value="1"/>
</dbReference>
<dbReference type="Pfam" id="PF00889">
    <property type="entry name" value="EF_TS"/>
    <property type="match status" value="1"/>
</dbReference>
<dbReference type="SUPFAM" id="SSF54713">
    <property type="entry name" value="Elongation factor Ts (EF-Ts), dimerisation domain"/>
    <property type="match status" value="2"/>
</dbReference>
<dbReference type="SUPFAM" id="SSF46934">
    <property type="entry name" value="UBA-like"/>
    <property type="match status" value="1"/>
</dbReference>
<dbReference type="PROSITE" id="PS01126">
    <property type="entry name" value="EF_TS_1"/>
    <property type="match status" value="1"/>
</dbReference>
<protein>
    <recommendedName>
        <fullName evidence="1">Elongation factor Ts</fullName>
        <shortName evidence="1">EF-Ts</shortName>
    </recommendedName>
</protein>
<name>EFTS_CLOK1</name>
<reference key="1">
    <citation type="submission" date="2005-09" db="EMBL/GenBank/DDBJ databases">
        <title>Complete genome sequence of Clostridium kluyveri and comparative genomics of Clostridia species.</title>
        <authorList>
            <person name="Inui M."/>
            <person name="Nonaka H."/>
            <person name="Shinoda Y."/>
            <person name="Ikenaga Y."/>
            <person name="Abe M."/>
            <person name="Naito K."/>
            <person name="Vertes A.A."/>
            <person name="Yukawa H."/>
        </authorList>
    </citation>
    <scope>NUCLEOTIDE SEQUENCE [LARGE SCALE GENOMIC DNA]</scope>
    <source>
        <strain>NBRC 12016</strain>
    </source>
</reference>
<gene>
    <name evidence="1" type="primary">tsf</name>
    <name type="ordered locus">CKR_1313</name>
</gene>
<sequence length="306" mass="33953">MITAQMVKELRERTGAGMMDCKKALNEAGGDSEKAIEILREKGLAAAAKKSGRIASEGLVKTYISEDGKVASIVEVNCETDFVAVNADFVNFVDNLAKQISLSESTTVEELSEEKYISDDSKTVSETLVNLISKLGENMAIRRFERLAVSKGLIESYIHGGGRIGVLVKLECEKESEILKEVAKDVAMQVAATNPLFLSKDTVDSATLDKEKEIFKVQALNEGKPEKIAEKIVIGRVQKYYKENCLIEQLWVKDSDLTIDKYLKSKSKEVGAPIKISNFIRFEKGEGIEKKEEDFAEEVRKQIEGK</sequence>